<dbReference type="EMBL" id="M32345">
    <property type="protein sequence ID" value="AAA88225.1"/>
    <property type="molecule type" value="Genomic_DNA"/>
</dbReference>
<dbReference type="RefSeq" id="WP_076611961.1">
    <property type="nucleotide sequence ID" value="NZ_CP030241.1"/>
</dbReference>
<dbReference type="SMR" id="P20665"/>
<dbReference type="KEGG" id="mboi:DQF64_03175"/>
<dbReference type="GO" id="GO:0003677">
    <property type="term" value="F:DNA binding"/>
    <property type="evidence" value="ECO:0007669"/>
    <property type="project" value="UniProtKB-KW"/>
</dbReference>
<dbReference type="GO" id="GO:0000150">
    <property type="term" value="F:DNA strand exchange activity"/>
    <property type="evidence" value="ECO:0007669"/>
    <property type="project" value="UniProtKB-KW"/>
</dbReference>
<dbReference type="GO" id="GO:0004803">
    <property type="term" value="F:transposase activity"/>
    <property type="evidence" value="ECO:0007669"/>
    <property type="project" value="InterPro"/>
</dbReference>
<dbReference type="GO" id="GO:0006313">
    <property type="term" value="P:DNA transposition"/>
    <property type="evidence" value="ECO:0007669"/>
    <property type="project" value="InterPro"/>
</dbReference>
<dbReference type="InterPro" id="IPR002525">
    <property type="entry name" value="Transp_IS110-like_N"/>
</dbReference>
<dbReference type="InterPro" id="IPR047650">
    <property type="entry name" value="Transpos_IS110"/>
</dbReference>
<dbReference type="InterPro" id="IPR003346">
    <property type="entry name" value="Transposase_20"/>
</dbReference>
<dbReference type="NCBIfam" id="NF033542">
    <property type="entry name" value="transpos_IS110"/>
    <property type="match status" value="1"/>
</dbReference>
<dbReference type="PANTHER" id="PTHR33055:SF3">
    <property type="entry name" value="PUTATIVE TRANSPOSASE FOR IS117-RELATED"/>
    <property type="match status" value="1"/>
</dbReference>
<dbReference type="PANTHER" id="PTHR33055">
    <property type="entry name" value="TRANSPOSASE FOR INSERTION SEQUENCE ELEMENT IS1111A"/>
    <property type="match status" value="1"/>
</dbReference>
<dbReference type="Pfam" id="PF01548">
    <property type="entry name" value="DEDD_Tnp_IS110"/>
    <property type="match status" value="1"/>
</dbReference>
<dbReference type="Pfam" id="PF02371">
    <property type="entry name" value="Transposase_20"/>
    <property type="match status" value="1"/>
</dbReference>
<reference key="1">
    <citation type="journal article" date="1990" name="J. Bacteriol.">
        <title>Sequence analysis of the inversion region containing the pilin genes of Moraxella bovis.</title>
        <authorList>
            <person name="Fulks K.A."/>
            <person name="Marrs C.F."/>
            <person name="Stevens S.P."/>
            <person name="Green M.R."/>
        </authorList>
    </citation>
    <scope>NUCLEOTIDE SEQUENCE [GENOMIC DNA]</scope>
    <source>
        <strain>EPP63</strain>
    </source>
</reference>
<protein>
    <recommendedName>
        <fullName>Pilin gene-inverting protein</fullName>
    </recommendedName>
    <alternativeName>
        <fullName>PIVML</fullName>
    </alternativeName>
</protein>
<organism>
    <name type="scientific">Moraxella bovis</name>
    <dbReference type="NCBI Taxonomy" id="476"/>
    <lineage>
        <taxon>Bacteria</taxon>
        <taxon>Pseudomonadati</taxon>
        <taxon>Pseudomonadota</taxon>
        <taxon>Gammaproteobacteria</taxon>
        <taxon>Moraxellales</taxon>
        <taxon>Moraxellaceae</taxon>
        <taxon>Moraxella</taxon>
    </lineage>
</organism>
<sequence>MSKTYIGIDIAKNTFDACFIAHNTWQNCTFTNNQQGFMELTLWIQAHHYNTSTLHLIIEATGTYWEKLAHWAISHHHKVSIVNPLYIHAYAKSLGIRTKTDKQDAILLARYGAKENPPLWQPKSDNEIKLTALLKQREHHKRQLIKERTRQEALSIYVKSYTDDNIRHWSDSITQLDHQIWQLINCTPELNHRASLLATIPGIGKKTLPHLLVAIGDGSSFQSAKHLASYAGLAPRHHQSGISIHKQSSIGFSGQKELRSALFMPAVIVSFGRYPAFQKFVKRMEQKGKTKKQIIIAIMRKLLTISYAVIRQNRPFDKRIHE</sequence>
<comment type="function">
    <text>May be the site-specific invertase required for pilin gene inversion. Moraxella can express either a Q or I pilin; the inversion of 2 kb of DNA determines which pilin is expressed.</text>
</comment>
<proteinExistence type="predicted"/>
<gene>
    <name type="primary">piv</name>
</gene>
<name>PIV_MORBO</name>
<keyword id="KW-0230">DNA invertase</keyword>
<keyword id="KW-0233">DNA recombination</keyword>
<keyword id="KW-0238">DNA-binding</keyword>
<keyword id="KW-1029">Fimbrium biogenesis</keyword>
<accession>P20665</accession>
<feature type="chain" id="PRO_0000058448" description="Pilin gene-inverting protein">
    <location>
        <begin position="1"/>
        <end position="322"/>
    </location>
</feature>